<organism>
    <name type="scientific">Pediococcus pentosaceus (strain ATCC 25745 / CCUG 21536 / LMG 10740 / 183-1w)</name>
    <dbReference type="NCBI Taxonomy" id="278197"/>
    <lineage>
        <taxon>Bacteria</taxon>
        <taxon>Bacillati</taxon>
        <taxon>Bacillota</taxon>
        <taxon>Bacilli</taxon>
        <taxon>Lactobacillales</taxon>
        <taxon>Lactobacillaceae</taxon>
        <taxon>Pediococcus</taxon>
    </lineage>
</organism>
<accession>Q03FN1</accession>
<reference key="1">
    <citation type="journal article" date="2006" name="Proc. Natl. Acad. Sci. U.S.A.">
        <title>Comparative genomics of the lactic acid bacteria.</title>
        <authorList>
            <person name="Makarova K.S."/>
            <person name="Slesarev A."/>
            <person name="Wolf Y.I."/>
            <person name="Sorokin A."/>
            <person name="Mirkin B."/>
            <person name="Koonin E.V."/>
            <person name="Pavlov A."/>
            <person name="Pavlova N."/>
            <person name="Karamychev V."/>
            <person name="Polouchine N."/>
            <person name="Shakhova V."/>
            <person name="Grigoriev I."/>
            <person name="Lou Y."/>
            <person name="Rohksar D."/>
            <person name="Lucas S."/>
            <person name="Huang K."/>
            <person name="Goodstein D.M."/>
            <person name="Hawkins T."/>
            <person name="Plengvidhya V."/>
            <person name="Welker D."/>
            <person name="Hughes J."/>
            <person name="Goh Y."/>
            <person name="Benson A."/>
            <person name="Baldwin K."/>
            <person name="Lee J.-H."/>
            <person name="Diaz-Muniz I."/>
            <person name="Dosti B."/>
            <person name="Smeianov V."/>
            <person name="Wechter W."/>
            <person name="Barabote R."/>
            <person name="Lorca G."/>
            <person name="Altermann E."/>
            <person name="Barrangou R."/>
            <person name="Ganesan B."/>
            <person name="Xie Y."/>
            <person name="Rawsthorne H."/>
            <person name="Tamir D."/>
            <person name="Parker C."/>
            <person name="Breidt F."/>
            <person name="Broadbent J.R."/>
            <person name="Hutkins R."/>
            <person name="O'Sullivan D."/>
            <person name="Steele J."/>
            <person name="Unlu G."/>
            <person name="Saier M.H. Jr."/>
            <person name="Klaenhammer T."/>
            <person name="Richardson P."/>
            <person name="Kozyavkin S."/>
            <person name="Weimer B.C."/>
            <person name="Mills D.A."/>
        </authorList>
    </citation>
    <scope>NUCLEOTIDE SEQUENCE [LARGE SCALE GENOMIC DNA]</scope>
    <source>
        <strain>ATCC 25745 / CCUG 21536 / LMG 10740 / 183-1w</strain>
    </source>
</reference>
<evidence type="ECO:0000255" key="1">
    <source>
        <dbReference type="HAMAP-Rule" id="MF_01575"/>
    </source>
</evidence>
<gene>
    <name type="ordered locus">PEPE_0933</name>
</gene>
<protein>
    <recommendedName>
        <fullName evidence="1">UPF0398 protein PEPE_0933</fullName>
    </recommendedName>
</protein>
<dbReference type="EMBL" id="CP000422">
    <property type="protein sequence ID" value="ABJ67991.1"/>
    <property type="molecule type" value="Genomic_DNA"/>
</dbReference>
<dbReference type="RefSeq" id="WP_002833050.1">
    <property type="nucleotide sequence ID" value="NC_008525.1"/>
</dbReference>
<dbReference type="SMR" id="Q03FN1"/>
<dbReference type="STRING" id="278197.PEPE_0933"/>
<dbReference type="GeneID" id="33062758"/>
<dbReference type="KEGG" id="ppe:PEPE_0933"/>
<dbReference type="eggNOG" id="COG4474">
    <property type="taxonomic scope" value="Bacteria"/>
</dbReference>
<dbReference type="HOGENOM" id="CLU_105319_0_0_9"/>
<dbReference type="OrthoDB" id="2301957at2"/>
<dbReference type="Proteomes" id="UP000000773">
    <property type="component" value="Chromosome"/>
</dbReference>
<dbReference type="Gene3D" id="3.40.50.450">
    <property type="match status" value="1"/>
</dbReference>
<dbReference type="HAMAP" id="MF_01575">
    <property type="entry name" value="UPF0398"/>
    <property type="match status" value="1"/>
</dbReference>
<dbReference type="InterPro" id="IPR010697">
    <property type="entry name" value="YspA"/>
</dbReference>
<dbReference type="NCBIfam" id="NF010181">
    <property type="entry name" value="PRK13660.1"/>
    <property type="match status" value="1"/>
</dbReference>
<dbReference type="PANTHER" id="PTHR38440:SF1">
    <property type="entry name" value="UPF0398 PROTEIN SPR0331"/>
    <property type="match status" value="1"/>
</dbReference>
<dbReference type="PANTHER" id="PTHR38440">
    <property type="entry name" value="UPF0398 PROTEIN YPSA"/>
    <property type="match status" value="1"/>
</dbReference>
<dbReference type="Pfam" id="PF06908">
    <property type="entry name" value="YpsA"/>
    <property type="match status" value="1"/>
</dbReference>
<dbReference type="PIRSF" id="PIRSF021290">
    <property type="entry name" value="DUF1273"/>
    <property type="match status" value="1"/>
</dbReference>
<dbReference type="SUPFAM" id="SSF102405">
    <property type="entry name" value="MCP/YpsA-like"/>
    <property type="match status" value="1"/>
</dbReference>
<proteinExistence type="inferred from homology"/>
<name>Y933_PEDPA</name>
<comment type="similarity">
    <text evidence="1">Belongs to the UPF0398 family.</text>
</comment>
<sequence length="183" mass="21667">MSRLWVTGYRSYELSIFSDQDPKLKVIQNALKRKLIEKVESGTTWIIAGPQLGTEQWSLELANELKMDYPELQTALMFPFSDFGKQWKEEKVEKLALIKAKVDFFANVSENPYQNPQQLRNYQNFMLNHTDEALLLYDDEHEGKTKFDLNAIRSFQEHNSYNVETIDFYDLEEESMLYEEKDE</sequence>
<feature type="chain" id="PRO_1000069218" description="UPF0398 protein PEPE_0933">
    <location>
        <begin position="1"/>
        <end position="183"/>
    </location>
</feature>